<name>CEBPB_BOVIN</name>
<accession>O02755</accession>
<comment type="function">
    <text evidence="1 2 3">Important transcription factor regulating the expression of genes involved in immune and inflammatory responses. Also plays a significant role in adipogenesis, as well as in the gluconeogenic pathway, liver regeneration, and hematopoiesis. The consensus recognition site is 5'-T[TG]NNGNAA[TG]-3'. Its functional capacity is governed by protein interactions and post-translational protein modifications. During early embryogenesis, plays essential and redundant roles with CEBPA. Has a promitotic effect on many cell types such as hepatocytes and adipocytes but has an antiproliferative effect on T-cells by repressing MYC expression, facilitating differentiation along the T-helper 2 lineage. Binds to regulatory regions of several acute-phase and cytokines genes and plays a role in the regulation of acute-phase reaction and inflammation. Also plays a role in intracellular bacteria killing. During adipogenesis, is rapidly expressed and, after activation by phosphorylation, induces CEBPA and PPARG, which turn on the series of adipocyte genes that give rise to the adipocyte phenotype. The delayed transactivation of the CEBPA and PPARG genes by CEBPB appears necessary to allow mitotic clonal expansion and thereby progression of terminal differentiation. Essential for female reproduction because of a critical role in ovarian follicle development. Restricts osteoclastogenesis: together with NFE2L1; represses expression of DSPP during odontoblast differentiation (By similarity).</text>
</comment>
<comment type="subunit">
    <text evidence="1 2 3">Binds DNA as a homodimer and as a heterodimer. Interacts with ATF4. Binds DNA as a heterodimer with ATF4. Interacts with MYB; within the complex, MYB and CEBPB bind to different promoter regions. Can form stable heterodimers with CEBPA, CEBPD and CEBPG. Interacts with SIX1 (By similarity). Interacts with TRIM28 and PTGES2. Interacts with PRDM16. Interacts with CCDC85B. Forms a complex with THOC5. Interacts with ZNF638; this interaction increases transcriptional activation. Interacts with CIDEA and CIDEC; these interactions increase transcriptional activation of a subset of CEBPB downstream target genes. Interacts with DDIT3/CHOP. Interacts with EP300; recruits EP300 to chromatin. Interacts with RORA; the interaction disrupts interaction with EP300. Interacts (not methylated) with MED23, MED26, SMARCA2, SMARCB1 and SMARCC1. Interacts with KAT2A and KAT2B (By similarity). Interacts with ATF5; EP300 is required for ATF5 and CEBPB interaction and DNA binding (By similarity). Interacts with NFE2L1; the heterodimer represses expression of DSPP during odontoblast differentiation (By similarity).</text>
</comment>
<comment type="subcellular location">
    <subcellularLocation>
        <location evidence="1">Nucleus</location>
    </subcellularLocation>
    <subcellularLocation>
        <location evidence="1">Cytoplasm</location>
    </subcellularLocation>
    <text evidence="1 3">Translocates to the nucleus when phosphorylated at Ser-288. In T-cells when sumoylated drawn to pericentric heterochromatin thereby allowing proliferation (By similarity).</text>
</comment>
<comment type="PTM">
    <text evidence="1">Methylated. Methylation at Arg-3 by CARM1 and at Lys-43 by EHMT2 inhibit transactivation activity. Methylation is probably inhibited by phosphorylation at Thr-236.</text>
</comment>
<comment type="PTM">
    <text evidence="1 3">Sumoylated by polymeric chains of SUMO2 or SUMO3 (By similarity). Sumoylation at Lys-174 is required for inhibition of T-cells proliferation. In adipocytes, sumoylation at Lys-174 by PIAS1 leads to ubiquitination and subsequent proteasomal degradation. Desumoylated by SENP2, which abolishes ubiquitination and stabilizes protein levels (By similarity).</text>
</comment>
<comment type="PTM">
    <text evidence="3">Ubiquitinated, leading to proteasomal degradation.</text>
</comment>
<comment type="PTM">
    <text evidence="1 3">Phosphorylated at Thr-236 by MAPK and CDK2, serves to prime phosphorylation at Thr-227 and Ser-232 by GSK3B and acquire DNA-binding as well as transactivation activities, required to induce adipogenesis. MAPK and CDK2 act sequentially to maintain Thr-236 in the primed phosphorylated state during mitotical cloning expansion and thereby progression of terminal differentiation. Phosphorylation at Thr-269 enhances transactivation activity. Phosphorylation at Ser-328 in response to calcium increases transactivation activity. Phosphorylated at Thr-236 by RPS6KA1.</text>
</comment>
<comment type="PTM">
    <text evidence="3">O-glycosylated, glycosylation at Ser-228 and Ser-229 prevents phosphorylation on Thr-236, Ser-232 and Thr-227 and DNA binding activity which delays the adipocyte differentiation program.</text>
</comment>
<comment type="PTM">
    <text evidence="3">Acetylated. Acetylation at Lys-43 is an important and dynamic regulatory event that contributes to its ability to transactivate target genes, including those associated with adipogenesis and adipocyte function. Deacetylation by HDAC1 represses its transactivation activity. Acetylated by KAT2A and KAT2B within a cluster of lysine residues between amino acids 129-133, this acetylation is strongly induced by glucocorticoid treatment and enhances transactivation activity.</text>
</comment>
<comment type="similarity">
    <text evidence="6">Belongs to the bZIP family. C/EBP subfamily.</text>
</comment>
<evidence type="ECO:0000250" key="1">
    <source>
        <dbReference type="UniProtKB" id="P17676"/>
    </source>
</evidence>
<evidence type="ECO:0000250" key="2">
    <source>
        <dbReference type="UniProtKB" id="P21272"/>
    </source>
</evidence>
<evidence type="ECO:0000250" key="3">
    <source>
        <dbReference type="UniProtKB" id="P28033"/>
    </source>
</evidence>
<evidence type="ECO:0000255" key="4">
    <source>
        <dbReference type="PROSITE-ProRule" id="PRU00978"/>
    </source>
</evidence>
<evidence type="ECO:0000256" key="5">
    <source>
        <dbReference type="SAM" id="MobiDB-lite"/>
    </source>
</evidence>
<evidence type="ECO:0000305" key="6"/>
<proteinExistence type="inferred from homology"/>
<protein>
    <recommendedName>
        <fullName>CCAAT/enhancer-binding protein beta</fullName>
        <shortName>C/EBP beta</shortName>
    </recommendedName>
</protein>
<dbReference type="EMBL" id="D82985">
    <property type="protein sequence ID" value="BAA20096.1"/>
    <property type="molecule type" value="Genomic_DNA"/>
</dbReference>
<dbReference type="RefSeq" id="NP_789745.1">
    <property type="nucleotide sequence ID" value="NM_176788.1"/>
</dbReference>
<dbReference type="SMR" id="O02755"/>
<dbReference type="FunCoup" id="O02755">
    <property type="interactions" value="241"/>
</dbReference>
<dbReference type="STRING" id="9913.ENSBTAP00000073202"/>
<dbReference type="GlyCosmos" id="O02755">
    <property type="glycosylation" value="2 sites, No reported glycans"/>
</dbReference>
<dbReference type="GlyGen" id="O02755">
    <property type="glycosylation" value="2 sites"/>
</dbReference>
<dbReference type="GeneID" id="338319"/>
<dbReference type="KEGG" id="bta:338319"/>
<dbReference type="CTD" id="1051"/>
<dbReference type="InParanoid" id="O02755"/>
<dbReference type="OrthoDB" id="10032067at2759"/>
<dbReference type="Proteomes" id="UP000009136">
    <property type="component" value="Unplaced"/>
</dbReference>
<dbReference type="GO" id="GO:0005737">
    <property type="term" value="C:cytoplasm"/>
    <property type="evidence" value="ECO:0007669"/>
    <property type="project" value="UniProtKB-SubCell"/>
</dbReference>
<dbReference type="GO" id="GO:0005634">
    <property type="term" value="C:nucleus"/>
    <property type="evidence" value="ECO:0000250"/>
    <property type="project" value="UniProtKB"/>
</dbReference>
<dbReference type="GO" id="GO:0003677">
    <property type="term" value="F:DNA binding"/>
    <property type="evidence" value="ECO:0000250"/>
    <property type="project" value="UniProtKB"/>
</dbReference>
<dbReference type="GO" id="GO:0000981">
    <property type="term" value="F:DNA-binding transcription factor activity, RNA polymerase II-specific"/>
    <property type="evidence" value="ECO:0000250"/>
    <property type="project" value="UniProtKB"/>
</dbReference>
<dbReference type="GO" id="GO:0001227">
    <property type="term" value="F:DNA-binding transcription repressor activity, RNA polymerase II-specific"/>
    <property type="evidence" value="ECO:0000250"/>
    <property type="project" value="UniProtKB"/>
</dbReference>
<dbReference type="GO" id="GO:0042803">
    <property type="term" value="F:protein homodimerization activity"/>
    <property type="evidence" value="ECO:0000250"/>
    <property type="project" value="UniProtKB"/>
</dbReference>
<dbReference type="GO" id="GO:0000978">
    <property type="term" value="F:RNA polymerase II cis-regulatory region sequence-specific DNA binding"/>
    <property type="evidence" value="ECO:0000318"/>
    <property type="project" value="GO_Central"/>
</dbReference>
<dbReference type="GO" id="GO:0030154">
    <property type="term" value="P:cell differentiation"/>
    <property type="evidence" value="ECO:0007669"/>
    <property type="project" value="UniProtKB-KW"/>
</dbReference>
<dbReference type="GO" id="GO:0042742">
    <property type="term" value="P:defense response to bacterium"/>
    <property type="evidence" value="ECO:0000250"/>
    <property type="project" value="UniProtKB"/>
</dbReference>
<dbReference type="GO" id="GO:0006351">
    <property type="term" value="P:DNA-templated transcription"/>
    <property type="evidence" value="ECO:0007669"/>
    <property type="project" value="InterPro"/>
</dbReference>
<dbReference type="GO" id="GO:0072574">
    <property type="term" value="P:hepatocyte proliferation"/>
    <property type="evidence" value="ECO:0000250"/>
    <property type="project" value="UniProtKB"/>
</dbReference>
<dbReference type="GO" id="GO:0097421">
    <property type="term" value="P:liver regeneration"/>
    <property type="evidence" value="ECO:0000250"/>
    <property type="project" value="UniProtKB"/>
</dbReference>
<dbReference type="GO" id="GO:0042130">
    <property type="term" value="P:negative regulation of T cell proliferation"/>
    <property type="evidence" value="ECO:0000250"/>
    <property type="project" value="UniProtKB"/>
</dbReference>
<dbReference type="GO" id="GO:0000122">
    <property type="term" value="P:negative regulation of transcription by RNA polymerase II"/>
    <property type="evidence" value="ECO:0000250"/>
    <property type="project" value="UniProtKB"/>
</dbReference>
<dbReference type="GO" id="GO:0001541">
    <property type="term" value="P:ovarian follicle development"/>
    <property type="evidence" value="ECO:0000250"/>
    <property type="project" value="UniProtKB"/>
</dbReference>
<dbReference type="GO" id="GO:0045600">
    <property type="term" value="P:positive regulation of fat cell differentiation"/>
    <property type="evidence" value="ECO:0000250"/>
    <property type="project" value="UniProtKB"/>
</dbReference>
<dbReference type="GO" id="GO:0032753">
    <property type="term" value="P:positive regulation of interleukin-4 production"/>
    <property type="evidence" value="ECO:0000250"/>
    <property type="project" value="UniProtKB"/>
</dbReference>
<dbReference type="GO" id="GO:0045595">
    <property type="term" value="P:regulation of cell differentiation"/>
    <property type="evidence" value="ECO:0000318"/>
    <property type="project" value="GO_Central"/>
</dbReference>
<dbReference type="GO" id="GO:0006355">
    <property type="term" value="P:regulation of DNA-templated transcription"/>
    <property type="evidence" value="ECO:0000250"/>
    <property type="project" value="UniProtKB"/>
</dbReference>
<dbReference type="GO" id="GO:1901329">
    <property type="term" value="P:regulation of odontoblast differentiation"/>
    <property type="evidence" value="ECO:0000250"/>
    <property type="project" value="UniProtKB"/>
</dbReference>
<dbReference type="GO" id="GO:0045670">
    <property type="term" value="P:regulation of osteoclast differentiation"/>
    <property type="evidence" value="ECO:0000250"/>
    <property type="project" value="UniProtKB"/>
</dbReference>
<dbReference type="GO" id="GO:0006357">
    <property type="term" value="P:regulation of transcription by RNA polymerase II"/>
    <property type="evidence" value="ECO:0000250"/>
    <property type="project" value="UniProtKB"/>
</dbReference>
<dbReference type="GO" id="GO:0034976">
    <property type="term" value="P:response to endoplasmic reticulum stress"/>
    <property type="evidence" value="ECO:0000250"/>
    <property type="project" value="UniProtKB"/>
</dbReference>
<dbReference type="CDD" id="cd14712">
    <property type="entry name" value="bZIP_CEBPB"/>
    <property type="match status" value="1"/>
</dbReference>
<dbReference type="FunFam" id="1.20.5.170:FF:000028">
    <property type="entry name" value="CCAAT/enhancer-binding protein beta"/>
    <property type="match status" value="1"/>
</dbReference>
<dbReference type="Gene3D" id="1.20.5.170">
    <property type="match status" value="1"/>
</dbReference>
<dbReference type="InterPro" id="IPR004827">
    <property type="entry name" value="bZIP"/>
</dbReference>
<dbReference type="InterPro" id="IPR046347">
    <property type="entry name" value="bZIP_sf"/>
</dbReference>
<dbReference type="InterPro" id="IPR031106">
    <property type="entry name" value="C/EBP"/>
</dbReference>
<dbReference type="InterPro" id="IPR016468">
    <property type="entry name" value="C/EBP_chordates"/>
</dbReference>
<dbReference type="PANTHER" id="PTHR23334">
    <property type="entry name" value="CCAAT/ENHANCER BINDING PROTEIN"/>
    <property type="match status" value="1"/>
</dbReference>
<dbReference type="PANTHER" id="PTHR23334:SF21">
    <property type="entry name" value="CCAAT_ENHANCER-BINDING PROTEIN BETA"/>
    <property type="match status" value="1"/>
</dbReference>
<dbReference type="Pfam" id="PF07716">
    <property type="entry name" value="bZIP_2"/>
    <property type="match status" value="1"/>
</dbReference>
<dbReference type="PIRSF" id="PIRSF005879">
    <property type="entry name" value="CCAAT/enhancer-binding"/>
    <property type="match status" value="1"/>
</dbReference>
<dbReference type="SMART" id="SM00338">
    <property type="entry name" value="BRLZ"/>
    <property type="match status" value="1"/>
</dbReference>
<dbReference type="SUPFAM" id="SSF57959">
    <property type="entry name" value="Leucine zipper domain"/>
    <property type="match status" value="1"/>
</dbReference>
<dbReference type="PROSITE" id="PS50217">
    <property type="entry name" value="BZIP"/>
    <property type="match status" value="1"/>
</dbReference>
<feature type="chain" id="PRO_0000076616" description="CCAAT/enhancer-binding protein beta">
    <location>
        <begin position="1"/>
        <end position="348"/>
    </location>
</feature>
<feature type="domain" description="bZIP" evidence="4">
    <location>
        <begin position="274"/>
        <end position="337"/>
    </location>
</feature>
<feature type="region of interest" description="Required for Lys-174 sumoylation" evidence="1">
    <location>
        <begin position="1"/>
        <end position="24"/>
    </location>
</feature>
<feature type="region of interest" description="Required for MYC transcriptional repression" evidence="3">
    <location>
        <begin position="24"/>
        <end position="135"/>
    </location>
</feature>
<feature type="region of interest" description="Disordered" evidence="5">
    <location>
        <begin position="44"/>
        <end position="65"/>
    </location>
</feature>
<feature type="region of interest" description="Disordered" evidence="5">
    <location>
        <begin position="79"/>
        <end position="112"/>
    </location>
</feature>
<feature type="region of interest" description="Disordered" evidence="5">
    <location>
        <begin position="158"/>
        <end position="178"/>
    </location>
</feature>
<feature type="region of interest" description="Disordered" evidence="5">
    <location>
        <begin position="219"/>
        <end position="277"/>
    </location>
</feature>
<feature type="region of interest" description="Basic motif" evidence="4">
    <location>
        <begin position="278"/>
        <end position="298"/>
    </location>
</feature>
<feature type="region of interest" description="Leucine-zipper" evidence="4">
    <location>
        <begin position="300"/>
        <end position="307"/>
    </location>
</feature>
<feature type="short sequence motif" description="9aaTAD">
    <location>
        <begin position="116"/>
        <end position="124"/>
    </location>
</feature>
<feature type="compositionally biased region" description="Pro residues" evidence="5">
    <location>
        <begin position="47"/>
        <end position="59"/>
    </location>
</feature>
<feature type="compositionally biased region" description="Pro residues" evidence="5">
    <location>
        <begin position="160"/>
        <end position="171"/>
    </location>
</feature>
<feature type="compositionally biased region" description="Low complexity" evidence="5">
    <location>
        <begin position="219"/>
        <end position="259"/>
    </location>
</feature>
<feature type="compositionally biased region" description="Basic and acidic residues" evidence="5">
    <location>
        <begin position="268"/>
        <end position="277"/>
    </location>
</feature>
<feature type="modified residue" description="Asymmetric dimethylarginine; by CARM1" evidence="1">
    <location>
        <position position="3"/>
    </location>
</feature>
<feature type="modified residue" description="N6-acetyllysine; alternate" evidence="3">
    <location>
        <position position="43"/>
    </location>
</feature>
<feature type="modified residue" description="N6-methylated lysine; alternate" evidence="3">
    <location>
        <position position="43"/>
    </location>
</feature>
<feature type="modified residue" description="N6-acetyllysine; by KAT2A and KAT2B" evidence="3">
    <location>
        <position position="129"/>
    </location>
</feature>
<feature type="modified residue" description="N6-acetyllysine; by KAT2A and KAT2B" evidence="3">
    <location>
        <position position="132"/>
    </location>
</feature>
<feature type="modified residue" description="N6-acetyllysine; by KAT2A and KAT2B; alternate" evidence="3">
    <location>
        <position position="133"/>
    </location>
</feature>
<feature type="modified residue" description="Phosphothreonine; by GSK3-beta" evidence="3">
    <location>
        <position position="227"/>
    </location>
</feature>
<feature type="modified residue" description="Phosphoserine; by GSK3-beta" evidence="3">
    <location>
        <position position="232"/>
    </location>
</feature>
<feature type="modified residue" description="Phosphothreonine; by RPS6KA1, CDK2 and MAPK" evidence="1">
    <location>
        <position position="236"/>
    </location>
</feature>
<feature type="modified residue" description="Phosphothreonine; by RPS6KA1 and PKC/PRKCA" evidence="3">
    <location>
        <position position="269"/>
    </location>
</feature>
<feature type="modified residue" description="Phosphoserine; by PKC/PRKCA" evidence="1">
    <location>
        <position position="291"/>
    </location>
</feature>
<feature type="modified residue" description="Phosphoserine; by CaMK2" evidence="3">
    <location>
        <position position="328"/>
    </location>
</feature>
<feature type="glycosylation site" description="O-linked (GlcNAc) serine" evidence="3">
    <location>
        <position position="228"/>
    </location>
</feature>
<feature type="glycosylation site" description="O-linked (GlcNAc) serine" evidence="3">
    <location>
        <position position="229"/>
    </location>
</feature>
<feature type="cross-link" description="Glycyl lysine isopeptide (Lys-Gly) (interchain with G-Cter in SUMO2); alternate" evidence="1">
    <location>
        <position position="133"/>
    </location>
</feature>
<feature type="cross-link" description="Glycyl lysine isopeptide (Lys-Gly) (interchain with G-Cter in SUMO); alternate" evidence="1 3">
    <location>
        <position position="174"/>
    </location>
</feature>
<feature type="cross-link" description="Glycyl lysine isopeptide (Lys-Gly) (interchain with G-Cter in SUMO2); alternate" evidence="1">
    <location>
        <position position="174"/>
    </location>
</feature>
<feature type="cross-link" description="Glycyl lysine isopeptide (Lys-Gly) (interchain with G-Cter in SUMO2)" evidence="1">
    <location>
        <position position="185"/>
    </location>
</feature>
<feature type="cross-link" description="Glycyl lysine isopeptide (Lys-Gly) (interchain with G-Cter in SUMO2)" evidence="1">
    <location>
        <position position="187"/>
    </location>
</feature>
<feature type="cross-link" description="Glycyl lysine isopeptide (Lys-Gly) (interchain with G-Cter in SUMO2)" evidence="1">
    <location>
        <position position="263"/>
    </location>
</feature>
<feature type="cross-link" description="Glycyl lysine isopeptide (Lys-Gly) (interchain with G-Cter in SUMO2)" evidence="1">
    <location>
        <position position="265"/>
    </location>
</feature>
<feature type="cross-link" description="Glycyl lysine isopeptide (Lys-Gly) (interchain with G-Cter in SUMO2)" evidence="1">
    <location>
        <position position="335"/>
    </location>
</feature>
<organism>
    <name type="scientific">Bos taurus</name>
    <name type="common">Bovine</name>
    <dbReference type="NCBI Taxonomy" id="9913"/>
    <lineage>
        <taxon>Eukaryota</taxon>
        <taxon>Metazoa</taxon>
        <taxon>Chordata</taxon>
        <taxon>Craniata</taxon>
        <taxon>Vertebrata</taxon>
        <taxon>Euteleostomi</taxon>
        <taxon>Mammalia</taxon>
        <taxon>Eutheria</taxon>
        <taxon>Laurasiatheria</taxon>
        <taxon>Artiodactyla</taxon>
        <taxon>Ruminantia</taxon>
        <taxon>Pecora</taxon>
        <taxon>Bovidae</taxon>
        <taxon>Bovinae</taxon>
        <taxon>Bos</taxon>
    </lineage>
</organism>
<reference key="1">
    <citation type="journal article" date="1997" name="J. Anim. Sci.">
        <title>Nucleotide sequence of bovine C/EBP beta gene.</title>
        <authorList>
            <person name="Yamaoka I."/>
            <person name="Taniguchi Y."/>
            <person name="Sasaki Y."/>
        </authorList>
    </citation>
    <scope>NUCLEOTIDE SEQUENCE [GENOMIC DNA]</scope>
    <source>
        <strain>Japanese black</strain>
    </source>
</reference>
<keyword id="KW-0007">Acetylation</keyword>
<keyword id="KW-0010">Activator</keyword>
<keyword id="KW-0963">Cytoplasm</keyword>
<keyword id="KW-0221">Differentiation</keyword>
<keyword id="KW-0238">DNA-binding</keyword>
<keyword id="KW-0325">Glycoprotein</keyword>
<keyword id="KW-1017">Isopeptide bond</keyword>
<keyword id="KW-0488">Methylation</keyword>
<keyword id="KW-0539">Nucleus</keyword>
<keyword id="KW-0597">Phosphoprotein</keyword>
<keyword id="KW-1185">Reference proteome</keyword>
<keyword id="KW-0804">Transcription</keyword>
<keyword id="KW-0805">Transcription regulation</keyword>
<keyword id="KW-0832">Ubl conjugation</keyword>
<sequence length="348" mass="36390">MQRLVVWDPVCLPLPPPPPAFKSMEVANFYYEADCLAAAYGGKAAPAAPPADRPGPRPPTGELGSIGEHERAIDFSPYLEPLGAPQAPAPTTASDTFEAAPSAPAPVPASSGQHHDFLSDLFSDDYGGKNCKKAAEYGYVSLGRLGAAKGALHPGCFAPLHPPPPPPPPPAELKAEPGFEPADCKRKEEAGAPGGGAAGMAAGFPYALRAYLGYQAVPSGSSGSLSTSSSSSPPGTPSPADAKATPAAAACYAGAAPAPSQVKSKAKKTVDKHSDEYKIRRERNNIAVRKSRDKAKMRNLETQHKVLELTGENERLQKKVEQLSREVSTLRNLFKTLPEPLLASSGHC</sequence>
<gene>
    <name type="primary">CEBPB</name>
</gene>